<sequence length="280" mass="31768">MTTHLQAKATLHNGVEMPWFGLGVFQVEEGSELVNAVKTAIVHGYRSIDTAAIYGNEAGVGEGIREGIEEAGISREDLFITSKVWNADLGYEETLAAFETSLSKLGLDYLDLYLIHWPVEGKYKEAWRALETLYKEGRIKAIGVSNFQIHHLEDLMTAAEIKPMINQVEFHPRLTQKELIRYCQNQGIQMEAWSPLMQGQLLDHPVLADIAQTYNKSVAQIILRWDLQHGIITIPKSTKEHRIKENASVFDFELTQDDMNRIDALNENLRVGPDPDNFDF</sequence>
<gene>
    <name type="primary">ytbE</name>
    <name type="ordered locus">BSU29050</name>
</gene>
<protein>
    <recommendedName>
        <fullName>Uncharacterized oxidoreductase YtbE</fullName>
        <ecNumber>1.-.-.-</ecNumber>
    </recommendedName>
</protein>
<proteinExistence type="evidence at protein level"/>
<accession>O34678</accession>
<accession>Q795V7</accession>
<organism>
    <name type="scientific">Bacillus subtilis (strain 168)</name>
    <dbReference type="NCBI Taxonomy" id="224308"/>
    <lineage>
        <taxon>Bacteria</taxon>
        <taxon>Bacillati</taxon>
        <taxon>Bacillota</taxon>
        <taxon>Bacilli</taxon>
        <taxon>Bacillales</taxon>
        <taxon>Bacillaceae</taxon>
        <taxon>Bacillus</taxon>
    </lineage>
</organism>
<reference key="1">
    <citation type="journal article" date="1997" name="Microbiology">
        <title>Sequencing and functional annotation of the Bacillus subtilis genes in the 200 kb rrnB-dnaB region.</title>
        <authorList>
            <person name="Lapidus A."/>
            <person name="Galleron N."/>
            <person name="Sorokin A."/>
            <person name="Ehrlich S.D."/>
        </authorList>
    </citation>
    <scope>NUCLEOTIDE SEQUENCE [GENOMIC DNA]</scope>
</reference>
<reference key="2">
    <citation type="journal article" date="1997" name="Nature">
        <title>The complete genome sequence of the Gram-positive bacterium Bacillus subtilis.</title>
        <authorList>
            <person name="Kunst F."/>
            <person name="Ogasawara N."/>
            <person name="Moszer I."/>
            <person name="Albertini A.M."/>
            <person name="Alloni G."/>
            <person name="Azevedo V."/>
            <person name="Bertero M.G."/>
            <person name="Bessieres P."/>
            <person name="Bolotin A."/>
            <person name="Borchert S."/>
            <person name="Borriss R."/>
            <person name="Boursier L."/>
            <person name="Brans A."/>
            <person name="Braun M."/>
            <person name="Brignell S.C."/>
            <person name="Bron S."/>
            <person name="Brouillet S."/>
            <person name="Bruschi C.V."/>
            <person name="Caldwell B."/>
            <person name="Capuano V."/>
            <person name="Carter N.M."/>
            <person name="Choi S.-K."/>
            <person name="Codani J.-J."/>
            <person name="Connerton I.F."/>
            <person name="Cummings N.J."/>
            <person name="Daniel R.A."/>
            <person name="Denizot F."/>
            <person name="Devine K.M."/>
            <person name="Duesterhoeft A."/>
            <person name="Ehrlich S.D."/>
            <person name="Emmerson P.T."/>
            <person name="Entian K.-D."/>
            <person name="Errington J."/>
            <person name="Fabret C."/>
            <person name="Ferrari E."/>
            <person name="Foulger D."/>
            <person name="Fritz C."/>
            <person name="Fujita M."/>
            <person name="Fujita Y."/>
            <person name="Fuma S."/>
            <person name="Galizzi A."/>
            <person name="Galleron N."/>
            <person name="Ghim S.-Y."/>
            <person name="Glaser P."/>
            <person name="Goffeau A."/>
            <person name="Golightly E.J."/>
            <person name="Grandi G."/>
            <person name="Guiseppi G."/>
            <person name="Guy B.J."/>
            <person name="Haga K."/>
            <person name="Haiech J."/>
            <person name="Harwood C.R."/>
            <person name="Henaut A."/>
            <person name="Hilbert H."/>
            <person name="Holsappel S."/>
            <person name="Hosono S."/>
            <person name="Hullo M.-F."/>
            <person name="Itaya M."/>
            <person name="Jones L.-M."/>
            <person name="Joris B."/>
            <person name="Karamata D."/>
            <person name="Kasahara Y."/>
            <person name="Klaerr-Blanchard M."/>
            <person name="Klein C."/>
            <person name="Kobayashi Y."/>
            <person name="Koetter P."/>
            <person name="Koningstein G."/>
            <person name="Krogh S."/>
            <person name="Kumano M."/>
            <person name="Kurita K."/>
            <person name="Lapidus A."/>
            <person name="Lardinois S."/>
            <person name="Lauber J."/>
            <person name="Lazarevic V."/>
            <person name="Lee S.-M."/>
            <person name="Levine A."/>
            <person name="Liu H."/>
            <person name="Masuda S."/>
            <person name="Mauel C."/>
            <person name="Medigue C."/>
            <person name="Medina N."/>
            <person name="Mellado R.P."/>
            <person name="Mizuno M."/>
            <person name="Moestl D."/>
            <person name="Nakai S."/>
            <person name="Noback M."/>
            <person name="Noone D."/>
            <person name="O'Reilly M."/>
            <person name="Ogawa K."/>
            <person name="Ogiwara A."/>
            <person name="Oudega B."/>
            <person name="Park S.-H."/>
            <person name="Parro V."/>
            <person name="Pohl T.M."/>
            <person name="Portetelle D."/>
            <person name="Porwollik S."/>
            <person name="Prescott A.M."/>
            <person name="Presecan E."/>
            <person name="Pujic P."/>
            <person name="Purnelle B."/>
            <person name="Rapoport G."/>
            <person name="Rey M."/>
            <person name="Reynolds S."/>
            <person name="Rieger M."/>
            <person name="Rivolta C."/>
            <person name="Rocha E."/>
            <person name="Roche B."/>
            <person name="Rose M."/>
            <person name="Sadaie Y."/>
            <person name="Sato T."/>
            <person name="Scanlan E."/>
            <person name="Schleich S."/>
            <person name="Schroeter R."/>
            <person name="Scoffone F."/>
            <person name="Sekiguchi J."/>
            <person name="Sekowska A."/>
            <person name="Seror S.J."/>
            <person name="Serror P."/>
            <person name="Shin B.-S."/>
            <person name="Soldo B."/>
            <person name="Sorokin A."/>
            <person name="Tacconi E."/>
            <person name="Takagi T."/>
            <person name="Takahashi H."/>
            <person name="Takemaru K."/>
            <person name="Takeuchi M."/>
            <person name="Tamakoshi A."/>
            <person name="Tanaka T."/>
            <person name="Terpstra P."/>
            <person name="Tognoni A."/>
            <person name="Tosato V."/>
            <person name="Uchiyama S."/>
            <person name="Vandenbol M."/>
            <person name="Vannier F."/>
            <person name="Vassarotti A."/>
            <person name="Viari A."/>
            <person name="Wambutt R."/>
            <person name="Wedler E."/>
            <person name="Wedler H."/>
            <person name="Weitzenegger T."/>
            <person name="Winters P."/>
            <person name="Wipat A."/>
            <person name="Yamamoto H."/>
            <person name="Yamane K."/>
            <person name="Yasumoto K."/>
            <person name="Yata K."/>
            <person name="Yoshida K."/>
            <person name="Yoshikawa H.-F."/>
            <person name="Zumstein E."/>
            <person name="Yoshikawa H."/>
            <person name="Danchin A."/>
        </authorList>
    </citation>
    <scope>NUCLEOTIDE SEQUENCE [LARGE SCALE GENOMIC DNA]</scope>
    <source>
        <strain>168</strain>
    </source>
</reference>
<evidence type="ECO:0000250" key="1"/>
<evidence type="ECO:0000305" key="2"/>
<evidence type="ECO:0007829" key="3">
    <source>
        <dbReference type="PDB" id="3B3D"/>
    </source>
</evidence>
<comment type="similarity">
    <text evidence="2">Belongs to the aldo/keto reductase family.</text>
</comment>
<dbReference type="EC" id="1.-.-.-"/>
<dbReference type="EMBL" id="AF008220">
    <property type="protein sequence ID" value="AAC00406.1"/>
    <property type="molecule type" value="Genomic_DNA"/>
</dbReference>
<dbReference type="EMBL" id="AL009126">
    <property type="protein sequence ID" value="CAB14865.1"/>
    <property type="molecule type" value="Genomic_DNA"/>
</dbReference>
<dbReference type="PIR" id="D69988">
    <property type="entry name" value="D69988"/>
</dbReference>
<dbReference type="RefSeq" id="NP_390783.1">
    <property type="nucleotide sequence ID" value="NC_000964.3"/>
</dbReference>
<dbReference type="RefSeq" id="WP_003229455.1">
    <property type="nucleotide sequence ID" value="NZ_OZ025638.1"/>
</dbReference>
<dbReference type="PDB" id="3B3D">
    <property type="method" value="X-ray"/>
    <property type="resolution" value="2.30 A"/>
    <property type="chains" value="A/B/C=1-280"/>
</dbReference>
<dbReference type="PDBsum" id="3B3D"/>
<dbReference type="SMR" id="O34678"/>
<dbReference type="FunCoup" id="O34678">
    <property type="interactions" value="540"/>
</dbReference>
<dbReference type="STRING" id="224308.BSU29050"/>
<dbReference type="PaxDb" id="224308-BSU29050"/>
<dbReference type="EnsemblBacteria" id="CAB14865">
    <property type="protein sequence ID" value="CAB14865"/>
    <property type="gene ID" value="BSU_29050"/>
</dbReference>
<dbReference type="GeneID" id="937384"/>
<dbReference type="KEGG" id="bsu:BSU29050"/>
<dbReference type="PATRIC" id="fig|224308.179.peg.3154"/>
<dbReference type="eggNOG" id="COG0656">
    <property type="taxonomic scope" value="Bacteria"/>
</dbReference>
<dbReference type="InParanoid" id="O34678"/>
<dbReference type="OrthoDB" id="9804790at2"/>
<dbReference type="PhylomeDB" id="O34678"/>
<dbReference type="BioCyc" id="BSUB:BSU29050-MONOMER"/>
<dbReference type="EvolutionaryTrace" id="O34678"/>
<dbReference type="Proteomes" id="UP000001570">
    <property type="component" value="Chromosome"/>
</dbReference>
<dbReference type="GO" id="GO:0004033">
    <property type="term" value="F:aldo-keto reductase (NADPH) activity"/>
    <property type="evidence" value="ECO:0000318"/>
    <property type="project" value="GO_Central"/>
</dbReference>
<dbReference type="CDD" id="cd19157">
    <property type="entry name" value="AKR_AKR5G1-3"/>
    <property type="match status" value="1"/>
</dbReference>
<dbReference type="FunFam" id="3.20.20.100:FF:000015">
    <property type="entry name" value="Oxidoreductase, aldo/keto reductase family"/>
    <property type="match status" value="1"/>
</dbReference>
<dbReference type="Gene3D" id="3.20.20.100">
    <property type="entry name" value="NADP-dependent oxidoreductase domain"/>
    <property type="match status" value="1"/>
</dbReference>
<dbReference type="InterPro" id="IPR020471">
    <property type="entry name" value="AKR"/>
</dbReference>
<dbReference type="InterPro" id="IPR044500">
    <property type="entry name" value="AKR5G"/>
</dbReference>
<dbReference type="InterPro" id="IPR018170">
    <property type="entry name" value="Aldo/ket_reductase_CS"/>
</dbReference>
<dbReference type="InterPro" id="IPR023210">
    <property type="entry name" value="NADP_OxRdtase_dom"/>
</dbReference>
<dbReference type="InterPro" id="IPR036812">
    <property type="entry name" value="NADP_OxRdtase_dom_sf"/>
</dbReference>
<dbReference type="PANTHER" id="PTHR43827">
    <property type="entry name" value="2,5-DIKETO-D-GLUCONIC ACID REDUCTASE"/>
    <property type="match status" value="1"/>
</dbReference>
<dbReference type="PANTHER" id="PTHR43827:SF1">
    <property type="entry name" value="2,5-DIKETO-D-GLUCONIC ACID REDUCTASE"/>
    <property type="match status" value="1"/>
</dbReference>
<dbReference type="Pfam" id="PF00248">
    <property type="entry name" value="Aldo_ket_red"/>
    <property type="match status" value="1"/>
</dbReference>
<dbReference type="PIRSF" id="PIRSF000097">
    <property type="entry name" value="AKR"/>
    <property type="match status" value="1"/>
</dbReference>
<dbReference type="PRINTS" id="PR00069">
    <property type="entry name" value="ALDKETRDTASE"/>
</dbReference>
<dbReference type="SUPFAM" id="SSF51430">
    <property type="entry name" value="NAD(P)-linked oxidoreductase"/>
    <property type="match status" value="1"/>
</dbReference>
<dbReference type="PROSITE" id="PS00798">
    <property type="entry name" value="ALDOKETO_REDUCTASE_1"/>
    <property type="match status" value="1"/>
</dbReference>
<dbReference type="PROSITE" id="PS00062">
    <property type="entry name" value="ALDOKETO_REDUCTASE_2"/>
    <property type="match status" value="1"/>
</dbReference>
<dbReference type="PROSITE" id="PS00063">
    <property type="entry name" value="ALDOKETO_REDUCTASE_3"/>
    <property type="match status" value="1"/>
</dbReference>
<name>YTBE_BACSU</name>
<feature type="chain" id="PRO_0000360647" description="Uncharacterized oxidoreductase YtbE">
    <location>
        <begin position="1"/>
        <end position="280"/>
    </location>
</feature>
<feature type="active site" description="Proton donor" evidence="1">
    <location>
        <position position="54"/>
    </location>
</feature>
<feature type="binding site" evidence="1">
    <location>
        <position position="116"/>
    </location>
    <ligand>
        <name>substrate</name>
    </ligand>
</feature>
<feature type="binding site" evidence="1">
    <location>
        <begin position="194"/>
        <end position="246"/>
    </location>
    <ligand>
        <name>NADP(+)</name>
        <dbReference type="ChEBI" id="CHEBI:58349"/>
    </ligand>
</feature>
<feature type="site" description="Lowers pKa of active site Tyr" evidence="1">
    <location>
        <position position="83"/>
    </location>
</feature>
<feature type="strand" evidence="3">
    <location>
        <begin position="8"/>
        <end position="10"/>
    </location>
</feature>
<feature type="strand" evidence="3">
    <location>
        <begin position="16"/>
        <end position="20"/>
    </location>
</feature>
<feature type="helix" evidence="3">
    <location>
        <begin position="31"/>
        <end position="43"/>
    </location>
</feature>
<feature type="strand" evidence="3">
    <location>
        <begin position="47"/>
        <end position="49"/>
    </location>
</feature>
<feature type="helix" evidence="3">
    <location>
        <begin position="52"/>
        <end position="54"/>
    </location>
</feature>
<feature type="helix" evidence="3">
    <location>
        <begin position="57"/>
        <end position="71"/>
    </location>
</feature>
<feature type="helix" evidence="3">
    <location>
        <begin position="75"/>
        <end position="77"/>
    </location>
</feature>
<feature type="strand" evidence="3">
    <location>
        <begin position="79"/>
        <end position="84"/>
    </location>
</feature>
<feature type="helix" evidence="3">
    <location>
        <begin position="86"/>
        <end position="88"/>
    </location>
</feature>
<feature type="helix" evidence="3">
    <location>
        <begin position="91"/>
        <end position="105"/>
    </location>
</feature>
<feature type="strand" evidence="3">
    <location>
        <begin position="110"/>
        <end position="117"/>
    </location>
</feature>
<feature type="turn" evidence="3">
    <location>
        <begin position="120"/>
        <end position="122"/>
    </location>
</feature>
<feature type="helix" evidence="3">
    <location>
        <begin position="123"/>
        <end position="135"/>
    </location>
</feature>
<feature type="strand" evidence="3">
    <location>
        <begin position="138"/>
        <end position="146"/>
    </location>
</feature>
<feature type="helix" evidence="3">
    <location>
        <begin position="149"/>
        <end position="155"/>
    </location>
</feature>
<feature type="turn" evidence="3">
    <location>
        <begin position="156"/>
        <end position="158"/>
    </location>
</feature>
<feature type="strand" evidence="3">
    <location>
        <begin position="164"/>
        <end position="169"/>
    </location>
</feature>
<feature type="helix" evidence="3">
    <location>
        <begin position="177"/>
        <end position="186"/>
    </location>
</feature>
<feature type="strand" evidence="3">
    <location>
        <begin position="189"/>
        <end position="194"/>
    </location>
</feature>
<feature type="helix" evidence="3">
    <location>
        <begin position="197"/>
        <end position="199"/>
    </location>
</feature>
<feature type="turn" evidence="3">
    <location>
        <begin position="200"/>
        <end position="203"/>
    </location>
</feature>
<feature type="helix" evidence="3">
    <location>
        <begin position="205"/>
        <end position="213"/>
    </location>
</feature>
<feature type="helix" evidence="3">
    <location>
        <begin position="218"/>
        <end position="228"/>
    </location>
</feature>
<feature type="helix" evidence="3">
    <location>
        <begin position="240"/>
        <end position="247"/>
    </location>
</feature>
<feature type="helix" evidence="3">
    <location>
        <begin position="256"/>
        <end position="263"/>
    </location>
</feature>
<keyword id="KW-0002">3D-structure</keyword>
<keyword id="KW-0521">NADP</keyword>
<keyword id="KW-0560">Oxidoreductase</keyword>
<keyword id="KW-1185">Reference proteome</keyword>